<dbReference type="EC" id="6.3.3.1" evidence="1"/>
<dbReference type="EMBL" id="CP000887">
    <property type="protein sequence ID" value="ACD72215.1"/>
    <property type="molecule type" value="Genomic_DNA"/>
</dbReference>
<dbReference type="RefSeq" id="WP_002963853.1">
    <property type="nucleotide sequence ID" value="NC_010742.1"/>
</dbReference>
<dbReference type="SMR" id="B2S4W8"/>
<dbReference type="GeneID" id="93016888"/>
<dbReference type="KEGG" id="bmc:BAbS19_I06840"/>
<dbReference type="HOGENOM" id="CLU_047116_0_0_5"/>
<dbReference type="UniPathway" id="UPA00074">
    <property type="reaction ID" value="UER00129"/>
</dbReference>
<dbReference type="Proteomes" id="UP000002565">
    <property type="component" value="Chromosome 1"/>
</dbReference>
<dbReference type="GO" id="GO:0005829">
    <property type="term" value="C:cytosol"/>
    <property type="evidence" value="ECO:0007669"/>
    <property type="project" value="TreeGrafter"/>
</dbReference>
<dbReference type="GO" id="GO:0005524">
    <property type="term" value="F:ATP binding"/>
    <property type="evidence" value="ECO:0007669"/>
    <property type="project" value="UniProtKB-KW"/>
</dbReference>
<dbReference type="GO" id="GO:0004637">
    <property type="term" value="F:phosphoribosylamine-glycine ligase activity"/>
    <property type="evidence" value="ECO:0007669"/>
    <property type="project" value="TreeGrafter"/>
</dbReference>
<dbReference type="GO" id="GO:0004641">
    <property type="term" value="F:phosphoribosylformylglycinamidine cyclo-ligase activity"/>
    <property type="evidence" value="ECO:0007669"/>
    <property type="project" value="UniProtKB-UniRule"/>
</dbReference>
<dbReference type="GO" id="GO:0006189">
    <property type="term" value="P:'de novo' IMP biosynthetic process"/>
    <property type="evidence" value="ECO:0007669"/>
    <property type="project" value="UniProtKB-UniRule"/>
</dbReference>
<dbReference type="GO" id="GO:0046084">
    <property type="term" value="P:adenine biosynthetic process"/>
    <property type="evidence" value="ECO:0007669"/>
    <property type="project" value="TreeGrafter"/>
</dbReference>
<dbReference type="CDD" id="cd02196">
    <property type="entry name" value="PurM"/>
    <property type="match status" value="1"/>
</dbReference>
<dbReference type="FunFam" id="3.30.1330.10:FF:000001">
    <property type="entry name" value="Phosphoribosylformylglycinamidine cyclo-ligase"/>
    <property type="match status" value="1"/>
</dbReference>
<dbReference type="FunFam" id="3.90.650.10:FF:000019">
    <property type="entry name" value="Trifunctional purine biosynthetic protein adenosine-3"/>
    <property type="match status" value="1"/>
</dbReference>
<dbReference type="Gene3D" id="3.90.650.10">
    <property type="entry name" value="PurM-like C-terminal domain"/>
    <property type="match status" value="1"/>
</dbReference>
<dbReference type="Gene3D" id="3.30.1330.10">
    <property type="entry name" value="PurM-like, N-terminal domain"/>
    <property type="match status" value="1"/>
</dbReference>
<dbReference type="HAMAP" id="MF_00741">
    <property type="entry name" value="AIRS"/>
    <property type="match status" value="1"/>
</dbReference>
<dbReference type="InterPro" id="IPR010918">
    <property type="entry name" value="PurM-like_C_dom"/>
</dbReference>
<dbReference type="InterPro" id="IPR036676">
    <property type="entry name" value="PurM-like_C_sf"/>
</dbReference>
<dbReference type="InterPro" id="IPR016188">
    <property type="entry name" value="PurM-like_N"/>
</dbReference>
<dbReference type="InterPro" id="IPR036921">
    <property type="entry name" value="PurM-like_N_sf"/>
</dbReference>
<dbReference type="InterPro" id="IPR004733">
    <property type="entry name" value="PurM_cligase"/>
</dbReference>
<dbReference type="NCBIfam" id="TIGR00878">
    <property type="entry name" value="purM"/>
    <property type="match status" value="1"/>
</dbReference>
<dbReference type="PANTHER" id="PTHR10520:SF12">
    <property type="entry name" value="TRIFUNCTIONAL PURINE BIOSYNTHETIC PROTEIN ADENOSINE-3"/>
    <property type="match status" value="1"/>
</dbReference>
<dbReference type="PANTHER" id="PTHR10520">
    <property type="entry name" value="TRIFUNCTIONAL PURINE BIOSYNTHETIC PROTEIN ADENOSINE-3-RELATED"/>
    <property type="match status" value="1"/>
</dbReference>
<dbReference type="Pfam" id="PF00586">
    <property type="entry name" value="AIRS"/>
    <property type="match status" value="1"/>
</dbReference>
<dbReference type="Pfam" id="PF02769">
    <property type="entry name" value="AIRS_C"/>
    <property type="match status" value="1"/>
</dbReference>
<dbReference type="SUPFAM" id="SSF56042">
    <property type="entry name" value="PurM C-terminal domain-like"/>
    <property type="match status" value="1"/>
</dbReference>
<dbReference type="SUPFAM" id="SSF55326">
    <property type="entry name" value="PurM N-terminal domain-like"/>
    <property type="match status" value="1"/>
</dbReference>
<keyword id="KW-0067">ATP-binding</keyword>
<keyword id="KW-0963">Cytoplasm</keyword>
<keyword id="KW-0436">Ligase</keyword>
<keyword id="KW-0547">Nucleotide-binding</keyword>
<keyword id="KW-0658">Purine biosynthesis</keyword>
<name>PUR5_BRUA1</name>
<protein>
    <recommendedName>
        <fullName evidence="1">Phosphoribosylformylglycinamidine cyclo-ligase</fullName>
        <ecNumber evidence="1">6.3.3.1</ecNumber>
    </recommendedName>
    <alternativeName>
        <fullName evidence="1">AIR synthase</fullName>
    </alternativeName>
    <alternativeName>
        <fullName evidence="1">AIRS</fullName>
    </alternativeName>
    <alternativeName>
        <fullName evidence="1">Phosphoribosyl-aminoimidazole synthetase</fullName>
    </alternativeName>
</protein>
<organism>
    <name type="scientific">Brucella abortus (strain S19)</name>
    <dbReference type="NCBI Taxonomy" id="430066"/>
    <lineage>
        <taxon>Bacteria</taxon>
        <taxon>Pseudomonadati</taxon>
        <taxon>Pseudomonadota</taxon>
        <taxon>Alphaproteobacteria</taxon>
        <taxon>Hyphomicrobiales</taxon>
        <taxon>Brucellaceae</taxon>
        <taxon>Brucella/Ochrobactrum group</taxon>
        <taxon>Brucella</taxon>
    </lineage>
</organism>
<accession>B2S4W8</accession>
<sequence length="359" mass="37447">MTMENKPAGQNGLTYAQAGVDIDAGNLMVEKIKPLVRSTRRPGADGEIGGFGGLFDLKAAGFKDPVLVAANDGVGTKLKIAIDADIHDTVGIDLVAMCVNDLVVQGAEPLFFLDYYATGKLSPDQGVAIVSGIAEGCRQAGCALIGGETAEMPGMYRDGDYDLAGFAVGAAERDRLLPRGDIAEGDIILGLASSGVHSNGFSLVRRIVELSGLGWKSQAPFQPGATLGEALLTPTRIYVKPLLAAIRACDGIKALAHITGGGFPDNIPRVLPKGLAAEIDLPAIAVPPVFSWLAKTGNVEPNEMLRTFNCGIGMIAVVNPAKVDEVIAALAAEGEKVVTLGRMTRREKDGVIYKGQLAL</sequence>
<feature type="chain" id="PRO_1000193000" description="Phosphoribosylformylglycinamidine cyclo-ligase">
    <location>
        <begin position="1"/>
        <end position="359"/>
    </location>
</feature>
<reference key="1">
    <citation type="journal article" date="2008" name="PLoS ONE">
        <title>Genome sequence of Brucella abortus vaccine strain S19 compared to virulent strains yields candidate virulence genes.</title>
        <authorList>
            <person name="Crasta O.R."/>
            <person name="Folkerts O."/>
            <person name="Fei Z."/>
            <person name="Mane S.P."/>
            <person name="Evans C."/>
            <person name="Martino-Catt S."/>
            <person name="Bricker B."/>
            <person name="Yu G."/>
            <person name="Du L."/>
            <person name="Sobral B.W."/>
        </authorList>
    </citation>
    <scope>NUCLEOTIDE SEQUENCE [LARGE SCALE GENOMIC DNA]</scope>
    <source>
        <strain>S19</strain>
    </source>
</reference>
<gene>
    <name evidence="1" type="primary">purM</name>
    <name type="ordered locus">BAbS19_I06840</name>
</gene>
<comment type="catalytic activity">
    <reaction evidence="1">
        <text>2-formamido-N(1)-(5-O-phospho-beta-D-ribosyl)acetamidine + ATP = 5-amino-1-(5-phospho-beta-D-ribosyl)imidazole + ADP + phosphate + H(+)</text>
        <dbReference type="Rhea" id="RHEA:23032"/>
        <dbReference type="ChEBI" id="CHEBI:15378"/>
        <dbReference type="ChEBI" id="CHEBI:30616"/>
        <dbReference type="ChEBI" id="CHEBI:43474"/>
        <dbReference type="ChEBI" id="CHEBI:137981"/>
        <dbReference type="ChEBI" id="CHEBI:147287"/>
        <dbReference type="ChEBI" id="CHEBI:456216"/>
        <dbReference type="EC" id="6.3.3.1"/>
    </reaction>
</comment>
<comment type="pathway">
    <text evidence="1">Purine metabolism; IMP biosynthesis via de novo pathway; 5-amino-1-(5-phospho-D-ribosyl)imidazole from N(2)-formyl-N(1)-(5-phospho-D-ribosyl)glycinamide: step 2/2.</text>
</comment>
<comment type="subcellular location">
    <subcellularLocation>
        <location evidence="1">Cytoplasm</location>
    </subcellularLocation>
</comment>
<comment type="similarity">
    <text evidence="1">Belongs to the AIR synthase family.</text>
</comment>
<evidence type="ECO:0000255" key="1">
    <source>
        <dbReference type="HAMAP-Rule" id="MF_00741"/>
    </source>
</evidence>
<proteinExistence type="inferred from homology"/>